<organism>
    <name type="scientific">Human adenovirus F serotype 41</name>
    <name type="common">HAdV-41</name>
    <name type="synonym">Human adenovirus 41</name>
    <dbReference type="NCBI Taxonomy" id="10524"/>
    <lineage>
        <taxon>Viruses</taxon>
        <taxon>Varidnaviria</taxon>
        <taxon>Bamfordvirae</taxon>
        <taxon>Preplasmiviricota</taxon>
        <taxon>Tectiliviricetes</taxon>
        <taxon>Rowavirales</taxon>
        <taxon>Adenoviridae</taxon>
        <taxon>Mastadenovirus</taxon>
        <taxon>Human mastadenovirus F</taxon>
    </lineage>
</organism>
<name>SF33K_ADE41</name>
<sequence>MPPKGNKQAIADRRSQKQQKLQEQWDEEEESWDDSQAEEVSDEEEMESWESLDEELEDKPPKDEEEEIIASAAAPSSKEPARSQPPTGKVGPSPPRPGLLKASRRWDTVSIAGSPPAPVAPTKRSEKTTRPRKEKTSAIATRQDTPVAQELRKRIFPTLYAIFQQSRGQQLELKVKNRSLRSLTRSCLYHRREDQLQRTLEDAEALFNKYCSVSLKD</sequence>
<gene>
    <name type="ORF">L4</name>
</gene>
<protein>
    <recommendedName>
        <fullName evidence="2">Protein 33K</fullName>
        <shortName>L4-33K</shortName>
    </recommendedName>
    <alternativeName>
        <fullName evidence="5">Splicing factor 33K</fullName>
    </alternativeName>
    <alternativeName>
        <fullName evidence="3">Terminase, small subunit</fullName>
    </alternativeName>
</protein>
<organismHost>
    <name type="scientific">Homo sapiens</name>
    <name type="common">Human</name>
    <dbReference type="NCBI Taxonomy" id="9606"/>
</organismHost>
<dbReference type="EMBL" id="X52532">
    <property type="protein sequence ID" value="CAB38632.1"/>
    <property type="molecule type" value="Genomic_DNA"/>
</dbReference>
<dbReference type="EMBL" id="X15137">
    <property type="protein sequence ID" value="CAA33236.1"/>
    <property type="molecule type" value="Genomic_DNA"/>
</dbReference>
<dbReference type="PIR" id="S10212">
    <property type="entry name" value="S10212"/>
</dbReference>
<dbReference type="GO" id="GO:0042025">
    <property type="term" value="C:host cell nucleus"/>
    <property type="evidence" value="ECO:0007669"/>
    <property type="project" value="UniProtKB-SubCell"/>
</dbReference>
<dbReference type="GO" id="GO:0006397">
    <property type="term" value="P:mRNA processing"/>
    <property type="evidence" value="ECO:0007669"/>
    <property type="project" value="UniProtKB-KW"/>
</dbReference>
<dbReference type="GO" id="GO:0019073">
    <property type="term" value="P:viral DNA genome packaging"/>
    <property type="evidence" value="ECO:0007669"/>
    <property type="project" value="InterPro"/>
</dbReference>
<dbReference type="InterPro" id="IPR021304">
    <property type="entry name" value="Adeno_L4-33K/L4-22K"/>
</dbReference>
<dbReference type="Pfam" id="PF11081">
    <property type="entry name" value="Adeno_L433K_22K"/>
    <property type="match status" value="1"/>
</dbReference>
<accession>P19416</accession>
<accession>Q64818</accession>
<comment type="function">
    <text evidence="1">Promotes alternative splicing of late transcripts by promoting splicing at weak 3' splice sites. Required for the temporal activation of major late pre-mRNA splicing at late times of infection. Induces the splicing and expression of the late capsid vertex protein (By similarity).</text>
</comment>
<comment type="function">
    <text evidence="3">Probably functions as the small terminase that is part of the molecular motor that translocates genomic DNA in empty capsid during DNA packaging. This motor is located at a unique vertex and comprises at least the IVa2 ATPase, the small terminase 33K and probably a portal. Forms a ring-like structure of about 17 nm in which genomic DNA is translocated into the capsid. Stimulates IVa2 ATPase activity in the presence of the viral genome. Once the DNA is packaged, the terminase detaches: the 33K protein is present in the empty particles, but not in the mature virions. Also involved in virion assembly.</text>
</comment>
<comment type="subunit">
    <text evidence="3">Homooligomer. Interacts with DBP; this interaction occurs at a unique vertex during genome packaging. Interacts with IVa2; this interaction occurs at a unique vertex during genome packaging and seems to potentiate IVa2 and 33K oligomerization.</text>
</comment>
<comment type="subcellular location">
    <subcellularLocation>
        <location evidence="3">Host nucleus</location>
    </subcellularLocation>
    <text evidence="3">At late time of infection, reorganized from the nuclear margin to ring-like structures at viral replication centers.</text>
</comment>
<comment type="alternative products">
    <event type="alternative splicing"/>
    <isoform>
        <id>P19416-1</id>
        <name>Protein 33K</name>
        <name>Splicing factor 33K</name>
        <name>L4-33K</name>
        <sequence type="displayed"/>
    </isoform>
    <isoform>
        <id>P19416-2</id>
        <name>Packaging protein 2</name>
        <name>Packaging protein 22K</name>
        <name>L4-22K</name>
        <sequence type="not described"/>
    </isoform>
</comment>
<comment type="induction">
    <text>Expressed in the late phase of the viral replicative cycle.</text>
</comment>
<comment type="domain">
    <text evidence="1">The tiny Arg-Ser repeat region (RS repeat) is necessary for the splicing enhancer function.</text>
</comment>
<comment type="PTM">
    <text evidence="1">Phosphorylated in vitro by human PKA and PRKDC. PRKDC inhibits, whereas PKA activates the splicing factor (By similarity).</text>
</comment>
<comment type="miscellaneous">
    <text evidence="1">All late proteins expressed from the major late promoter are produced by alternative splicing and alternative polyadenylation of the same gene giving rise to non-overlapping ORFs. Expression of packaging protein 2 and splicing factor is controlled by a L4 promoter distinct from the major late promoter (By similarity).</text>
</comment>
<comment type="miscellaneous">
    <molecule>Isoform Protein 33K</molecule>
    <text>Spliced isoform.</text>
</comment>
<comment type="miscellaneous">
    <molecule>Isoform Packaging protein 2</molecule>
    <text evidence="5">Unspliced isoform.</text>
</comment>
<comment type="similarity">
    <text evidence="5">Belongs to the adenoviridae splicing factor family.</text>
</comment>
<evidence type="ECO:0000250" key="1"/>
<evidence type="ECO:0000250" key="2">
    <source>
        <dbReference type="UniProtKB" id="P24939"/>
    </source>
</evidence>
<evidence type="ECO:0000250" key="3">
    <source>
        <dbReference type="UniProtKB" id="P24940"/>
    </source>
</evidence>
<evidence type="ECO:0000256" key="4">
    <source>
        <dbReference type="SAM" id="MobiDB-lite"/>
    </source>
</evidence>
<evidence type="ECO:0000305" key="5"/>
<proteinExistence type="evidence at transcript level"/>
<keyword id="KW-0025">Alternative splicing</keyword>
<keyword id="KW-1048">Host nucleus</keyword>
<keyword id="KW-0945">Host-virus interaction</keyword>
<keyword id="KW-0426">Late protein</keyword>
<keyword id="KW-0507">mRNA processing</keyword>
<keyword id="KW-0597">Phosphoprotein</keyword>
<keyword id="KW-0118">Viral capsid assembly</keyword>
<keyword id="KW-0231">Viral genome packaging</keyword>
<keyword id="KW-1188">Viral release from host cell</keyword>
<feature type="chain" id="PRO_0000221914" description="Protein 33K">
    <location>
        <begin position="1"/>
        <end position="217"/>
    </location>
</feature>
<feature type="region of interest" description="Disordered" evidence="4">
    <location>
        <begin position="1"/>
        <end position="142"/>
    </location>
</feature>
<feature type="region of interest" description="Necessary for nuclear subcellular location" evidence="1">
    <location>
        <begin position="160"/>
        <end position="187"/>
    </location>
</feature>
<feature type="region of interest" description="RS-repeat; required for splicing enhancer activity" evidence="1">
    <location>
        <begin position="166"/>
        <end position="186"/>
    </location>
</feature>
<feature type="compositionally biased region" description="Acidic residues" evidence="4">
    <location>
        <begin position="24"/>
        <end position="68"/>
    </location>
</feature>
<feature type="compositionally biased region" description="Low complexity" evidence="4">
    <location>
        <begin position="69"/>
        <end position="78"/>
    </location>
</feature>
<feature type="compositionally biased region" description="Basic and acidic residues" evidence="4">
    <location>
        <begin position="123"/>
        <end position="136"/>
    </location>
</feature>
<reference key="1">
    <citation type="journal article" date="1990" name="Nucleic Acids Res.">
        <title>Nucleotide sequence of the region coding for 100K and 33K proteins of human enteric adenovirus type 41 (Tak).</title>
        <authorList>
            <person name="Slemenda S.B."/>
            <person name="Pieniazek N.J."/>
            <person name="Velarde J. Jr."/>
            <person name="Pieniazek D."/>
            <person name="Luftig R.B."/>
        </authorList>
    </citation>
    <scope>NUCLEOTIDE SEQUENCE [GENOMIC DNA]</scope>
    <source>
        <strain>Tak</strain>
    </source>
</reference>
<reference key="2">
    <citation type="journal article" date="1989" name="Nucleic Acids Res.">
        <title>Nucleotide sequence of human enteric adenovirus type 41 hexon-associated protein VIII precursor (pVIII) including the early region E3 promoter.</title>
        <authorList>
            <person name="Pieniazek N.J."/>
            <person name="Velarde J. Jr."/>
            <person name="Pieniazek D."/>
            <person name="Luftig R.B."/>
        </authorList>
    </citation>
    <scope>NUCLEOTIDE SEQUENCE [GENOMIC DNA] OF 203-217</scope>
    <source>
        <strain>Tak</strain>
    </source>
</reference>